<reference key="1">
    <citation type="journal article" date="2010" name="BMC Genomics">
        <title>A genomic perspective on the potential of Actinobacillus succinogenes for industrial succinate production.</title>
        <authorList>
            <person name="McKinlay J.B."/>
            <person name="Laivenieks M."/>
            <person name="Schindler B.D."/>
            <person name="McKinlay A.A."/>
            <person name="Siddaramappa S."/>
            <person name="Challacombe J.F."/>
            <person name="Lowry S.R."/>
            <person name="Clum A."/>
            <person name="Lapidus A.L."/>
            <person name="Burkhart K.B."/>
            <person name="Harkins V."/>
            <person name="Vieille C."/>
        </authorList>
    </citation>
    <scope>NUCLEOTIDE SEQUENCE [LARGE SCALE GENOMIC DNA]</scope>
    <source>
        <strain>ATCC 55618 / DSM 22257 / CCUG 43843 / 130Z</strain>
    </source>
</reference>
<gene>
    <name evidence="1" type="primary">rplC</name>
    <name type="ordered locus">Asuc_0459</name>
</gene>
<keyword id="KW-0488">Methylation</keyword>
<keyword id="KW-1185">Reference proteome</keyword>
<keyword id="KW-0687">Ribonucleoprotein</keyword>
<keyword id="KW-0689">Ribosomal protein</keyword>
<keyword id="KW-0694">RNA-binding</keyword>
<keyword id="KW-0699">rRNA-binding</keyword>
<feature type="chain" id="PRO_1000073246" description="Large ribosomal subunit protein uL3">
    <location>
        <begin position="1"/>
        <end position="208"/>
    </location>
</feature>
<feature type="modified residue" description="N5-methylglutamine" evidence="1">
    <location>
        <position position="149"/>
    </location>
</feature>
<comment type="function">
    <text evidence="1">One of the primary rRNA binding proteins, it binds directly near the 3'-end of the 23S rRNA, where it nucleates assembly of the 50S subunit.</text>
</comment>
<comment type="subunit">
    <text evidence="1">Part of the 50S ribosomal subunit. Forms a cluster with proteins L14 and L19.</text>
</comment>
<comment type="PTM">
    <text evidence="1">Methylated by PrmB.</text>
</comment>
<comment type="similarity">
    <text evidence="1">Belongs to the universal ribosomal protein uL3 family.</text>
</comment>
<proteinExistence type="inferred from homology"/>
<organism>
    <name type="scientific">Actinobacillus succinogenes (strain ATCC 55618 / DSM 22257 / CCUG 43843 / 130Z)</name>
    <dbReference type="NCBI Taxonomy" id="339671"/>
    <lineage>
        <taxon>Bacteria</taxon>
        <taxon>Pseudomonadati</taxon>
        <taxon>Pseudomonadota</taxon>
        <taxon>Gammaproteobacteria</taxon>
        <taxon>Pasteurellales</taxon>
        <taxon>Pasteurellaceae</taxon>
        <taxon>Actinobacillus</taxon>
    </lineage>
</organism>
<name>RL3_ACTSZ</name>
<protein>
    <recommendedName>
        <fullName evidence="1">Large ribosomal subunit protein uL3</fullName>
    </recommendedName>
    <alternativeName>
        <fullName evidence="2">50S ribosomal protein L3</fullName>
    </alternativeName>
</protein>
<dbReference type="EMBL" id="CP000746">
    <property type="protein sequence ID" value="ABR73835.1"/>
    <property type="molecule type" value="Genomic_DNA"/>
</dbReference>
<dbReference type="RefSeq" id="WP_012072219.1">
    <property type="nucleotide sequence ID" value="NC_009655.1"/>
</dbReference>
<dbReference type="SMR" id="A6VLI8"/>
<dbReference type="STRING" id="339671.Asuc_0459"/>
<dbReference type="KEGG" id="asu:Asuc_0459"/>
<dbReference type="eggNOG" id="COG0087">
    <property type="taxonomic scope" value="Bacteria"/>
</dbReference>
<dbReference type="HOGENOM" id="CLU_044142_4_1_6"/>
<dbReference type="OrthoDB" id="9806135at2"/>
<dbReference type="Proteomes" id="UP000001114">
    <property type="component" value="Chromosome"/>
</dbReference>
<dbReference type="GO" id="GO:0022625">
    <property type="term" value="C:cytosolic large ribosomal subunit"/>
    <property type="evidence" value="ECO:0007669"/>
    <property type="project" value="TreeGrafter"/>
</dbReference>
<dbReference type="GO" id="GO:0019843">
    <property type="term" value="F:rRNA binding"/>
    <property type="evidence" value="ECO:0007669"/>
    <property type="project" value="UniProtKB-UniRule"/>
</dbReference>
<dbReference type="GO" id="GO:0003735">
    <property type="term" value="F:structural constituent of ribosome"/>
    <property type="evidence" value="ECO:0007669"/>
    <property type="project" value="InterPro"/>
</dbReference>
<dbReference type="GO" id="GO:0006412">
    <property type="term" value="P:translation"/>
    <property type="evidence" value="ECO:0007669"/>
    <property type="project" value="UniProtKB-UniRule"/>
</dbReference>
<dbReference type="FunFam" id="2.40.30.10:FF:000004">
    <property type="entry name" value="50S ribosomal protein L3"/>
    <property type="match status" value="1"/>
</dbReference>
<dbReference type="FunFam" id="3.30.160.810:FF:000001">
    <property type="entry name" value="50S ribosomal protein L3"/>
    <property type="match status" value="1"/>
</dbReference>
<dbReference type="Gene3D" id="3.30.160.810">
    <property type="match status" value="1"/>
</dbReference>
<dbReference type="Gene3D" id="2.40.30.10">
    <property type="entry name" value="Translation factors"/>
    <property type="match status" value="1"/>
</dbReference>
<dbReference type="HAMAP" id="MF_01325_B">
    <property type="entry name" value="Ribosomal_uL3_B"/>
    <property type="match status" value="1"/>
</dbReference>
<dbReference type="InterPro" id="IPR000597">
    <property type="entry name" value="Ribosomal_uL3"/>
</dbReference>
<dbReference type="InterPro" id="IPR019927">
    <property type="entry name" value="Ribosomal_uL3_bac/org-type"/>
</dbReference>
<dbReference type="InterPro" id="IPR019926">
    <property type="entry name" value="Ribosomal_uL3_CS"/>
</dbReference>
<dbReference type="InterPro" id="IPR009000">
    <property type="entry name" value="Transl_B-barrel_sf"/>
</dbReference>
<dbReference type="NCBIfam" id="TIGR03625">
    <property type="entry name" value="L3_bact"/>
    <property type="match status" value="1"/>
</dbReference>
<dbReference type="PANTHER" id="PTHR11229">
    <property type="entry name" value="50S RIBOSOMAL PROTEIN L3"/>
    <property type="match status" value="1"/>
</dbReference>
<dbReference type="PANTHER" id="PTHR11229:SF16">
    <property type="entry name" value="LARGE RIBOSOMAL SUBUNIT PROTEIN UL3C"/>
    <property type="match status" value="1"/>
</dbReference>
<dbReference type="Pfam" id="PF00297">
    <property type="entry name" value="Ribosomal_L3"/>
    <property type="match status" value="1"/>
</dbReference>
<dbReference type="SUPFAM" id="SSF50447">
    <property type="entry name" value="Translation proteins"/>
    <property type="match status" value="1"/>
</dbReference>
<dbReference type="PROSITE" id="PS00474">
    <property type="entry name" value="RIBOSOMAL_L3"/>
    <property type="match status" value="1"/>
</dbReference>
<sequence length="208" mass="22326">MIGLVGRKVGMTRVFTEDGVSIPVTVIEIEANRVTQVKTLENDGYTAVQVTTGSKKASRVTKPEAGHFVKAGVEAGRGLWEFRTEGEEFTLGQEINVDIFADVKKVDVTGTSKGKGFQGGVKRWNFRTQDATHGNSLSHRVLGSIGQNQTPGRVFKGKKMAGHLGAERVTVQSLEVVRVDAERKLLLVKGAVPGATNSDVIVKPAVKA</sequence>
<evidence type="ECO:0000255" key="1">
    <source>
        <dbReference type="HAMAP-Rule" id="MF_01325"/>
    </source>
</evidence>
<evidence type="ECO:0000305" key="2"/>
<accession>A6VLI8</accession>